<evidence type="ECO:0000255" key="1">
    <source>
        <dbReference type="HAMAP-Rule" id="MF_00409"/>
    </source>
</evidence>
<proteinExistence type="inferred from homology"/>
<comment type="function">
    <text evidence="1">Transfers the gamma-phosphate of ATP to the 4'-position of a tetraacyldisaccharide 1-phosphate intermediate (termed DS-1-P) to form tetraacyldisaccharide 1,4'-bis-phosphate (lipid IVA).</text>
</comment>
<comment type="catalytic activity">
    <reaction evidence="1">
        <text>a lipid A disaccharide + ATP = a lipid IVA + ADP + H(+)</text>
        <dbReference type="Rhea" id="RHEA:67840"/>
        <dbReference type="ChEBI" id="CHEBI:15378"/>
        <dbReference type="ChEBI" id="CHEBI:30616"/>
        <dbReference type="ChEBI" id="CHEBI:176343"/>
        <dbReference type="ChEBI" id="CHEBI:176425"/>
        <dbReference type="ChEBI" id="CHEBI:456216"/>
        <dbReference type="EC" id="2.7.1.130"/>
    </reaction>
</comment>
<comment type="pathway">
    <text evidence="1">Glycolipid biosynthesis; lipid IV(A) biosynthesis; lipid IV(A) from (3R)-3-hydroxytetradecanoyl-[acyl-carrier-protein] and UDP-N-acetyl-alpha-D-glucosamine: step 6/6.</text>
</comment>
<comment type="similarity">
    <text evidence="1">Belongs to the LpxK family.</text>
</comment>
<name>LPXK_HELPH</name>
<dbReference type="EC" id="2.7.1.130" evidence="1"/>
<dbReference type="EMBL" id="CP000241">
    <property type="protein sequence ID" value="ABF84399.1"/>
    <property type="molecule type" value="Genomic_DNA"/>
</dbReference>
<dbReference type="RefSeq" id="WP_000833918.1">
    <property type="nucleotide sequence ID" value="NC_008086.1"/>
</dbReference>
<dbReference type="SMR" id="Q1CUH3"/>
<dbReference type="KEGG" id="hpa:HPAG1_0332"/>
<dbReference type="HOGENOM" id="CLU_038816_1_0_7"/>
<dbReference type="UniPathway" id="UPA00359">
    <property type="reaction ID" value="UER00482"/>
</dbReference>
<dbReference type="GO" id="GO:0005886">
    <property type="term" value="C:plasma membrane"/>
    <property type="evidence" value="ECO:0007669"/>
    <property type="project" value="TreeGrafter"/>
</dbReference>
<dbReference type="GO" id="GO:0005524">
    <property type="term" value="F:ATP binding"/>
    <property type="evidence" value="ECO:0007669"/>
    <property type="project" value="UniProtKB-UniRule"/>
</dbReference>
<dbReference type="GO" id="GO:0009029">
    <property type="term" value="F:tetraacyldisaccharide 4'-kinase activity"/>
    <property type="evidence" value="ECO:0007669"/>
    <property type="project" value="UniProtKB-UniRule"/>
</dbReference>
<dbReference type="GO" id="GO:0009245">
    <property type="term" value="P:lipid A biosynthetic process"/>
    <property type="evidence" value="ECO:0007669"/>
    <property type="project" value="UniProtKB-UniRule"/>
</dbReference>
<dbReference type="GO" id="GO:0009244">
    <property type="term" value="P:lipopolysaccharide core region biosynthetic process"/>
    <property type="evidence" value="ECO:0007669"/>
    <property type="project" value="TreeGrafter"/>
</dbReference>
<dbReference type="HAMAP" id="MF_00409">
    <property type="entry name" value="LpxK"/>
    <property type="match status" value="1"/>
</dbReference>
<dbReference type="InterPro" id="IPR003758">
    <property type="entry name" value="LpxK"/>
</dbReference>
<dbReference type="NCBIfam" id="NF001892">
    <property type="entry name" value="PRK00652.1-5"/>
    <property type="match status" value="1"/>
</dbReference>
<dbReference type="PANTHER" id="PTHR42724">
    <property type="entry name" value="TETRAACYLDISACCHARIDE 4'-KINASE"/>
    <property type="match status" value="1"/>
</dbReference>
<dbReference type="PANTHER" id="PTHR42724:SF1">
    <property type="entry name" value="TETRAACYLDISACCHARIDE 4'-KINASE, MITOCHONDRIAL-RELATED"/>
    <property type="match status" value="1"/>
</dbReference>
<dbReference type="Pfam" id="PF02606">
    <property type="entry name" value="LpxK"/>
    <property type="match status" value="2"/>
</dbReference>
<accession>Q1CUH3</accession>
<gene>
    <name evidence="1" type="primary">lpxK</name>
    <name type="ordered locus">HPAG1_0332</name>
</gene>
<protein>
    <recommendedName>
        <fullName evidence="1">Tetraacyldisaccharide 4'-kinase</fullName>
        <ecNumber evidence="1">2.7.1.130</ecNumber>
    </recommendedName>
    <alternativeName>
        <fullName evidence="1">Lipid A 4'-kinase</fullName>
    </alternativeName>
</protein>
<sequence length="312" mass="35468">MKSDKPFLERYFYDPTLLQKGLIFALYPFSLIYQGIATIKRKTAKKHDFKIPLISIGNLIAGGSGKTPFILEIAPRYQEVAIVSRGYQRDSKGLVVVSVKGNILVPQQTAGDEAYLLALNLKQASVIVSEKRELGVLKALELGAKIVFLDDGFRFNFNQFNALLKPKIPPYYPFCLPSGLYRESIKSYKEAHLVITEDKDYQRITSISHPTKRMLLVTAIANPSRLDAFLPKEVVKKLYFKDHALFDLKLLEKEFYQNSATSLLVTSKDLVKLQDCSLPLSVLDLKLEIDPKILEKIDRYILSYPCNTKERL</sequence>
<organism>
    <name type="scientific">Helicobacter pylori (strain HPAG1)</name>
    <dbReference type="NCBI Taxonomy" id="357544"/>
    <lineage>
        <taxon>Bacteria</taxon>
        <taxon>Pseudomonadati</taxon>
        <taxon>Campylobacterota</taxon>
        <taxon>Epsilonproteobacteria</taxon>
        <taxon>Campylobacterales</taxon>
        <taxon>Helicobacteraceae</taxon>
        <taxon>Helicobacter</taxon>
    </lineage>
</organism>
<reference key="1">
    <citation type="journal article" date="2006" name="Proc. Natl. Acad. Sci. U.S.A.">
        <title>The complete genome sequence of a chronic atrophic gastritis Helicobacter pylori strain: evolution during disease progression.</title>
        <authorList>
            <person name="Oh J.D."/>
            <person name="Kling-Baeckhed H."/>
            <person name="Giannakis M."/>
            <person name="Xu J."/>
            <person name="Fulton R.S."/>
            <person name="Fulton L.A."/>
            <person name="Cordum H.S."/>
            <person name="Wang C."/>
            <person name="Elliott G."/>
            <person name="Edwards J."/>
            <person name="Mardis E.R."/>
            <person name="Engstrand L.G."/>
            <person name="Gordon J.I."/>
        </authorList>
    </citation>
    <scope>NUCLEOTIDE SEQUENCE [LARGE SCALE GENOMIC DNA]</scope>
    <source>
        <strain>HPAG1</strain>
    </source>
</reference>
<feature type="chain" id="PRO_0000291210" description="Tetraacyldisaccharide 4'-kinase">
    <location>
        <begin position="1"/>
        <end position="312"/>
    </location>
</feature>
<feature type="binding site" evidence="1">
    <location>
        <begin position="60"/>
        <end position="67"/>
    </location>
    <ligand>
        <name>ATP</name>
        <dbReference type="ChEBI" id="CHEBI:30616"/>
    </ligand>
</feature>
<keyword id="KW-0067">ATP-binding</keyword>
<keyword id="KW-0418">Kinase</keyword>
<keyword id="KW-0441">Lipid A biosynthesis</keyword>
<keyword id="KW-0444">Lipid biosynthesis</keyword>
<keyword id="KW-0443">Lipid metabolism</keyword>
<keyword id="KW-0547">Nucleotide-binding</keyword>
<keyword id="KW-0808">Transferase</keyword>